<name>OADC_PSEP7</name>
<comment type="function">
    <text evidence="1">Catalyzes the decarboxylation of oxaloacetate into pyruvate. Seems to play a role in maintaining cellular concentrations of bicarbonate and pyruvate.</text>
</comment>
<comment type="catalytic activity">
    <reaction evidence="1">
        <text>oxaloacetate + H(+) = pyruvate + CO2</text>
        <dbReference type="Rhea" id="RHEA:15641"/>
        <dbReference type="ChEBI" id="CHEBI:15361"/>
        <dbReference type="ChEBI" id="CHEBI:15378"/>
        <dbReference type="ChEBI" id="CHEBI:16452"/>
        <dbReference type="ChEBI" id="CHEBI:16526"/>
        <dbReference type="EC" id="4.1.1.112"/>
    </reaction>
</comment>
<comment type="cofactor">
    <cofactor evidence="1">
        <name>Mg(2+)</name>
        <dbReference type="ChEBI" id="CHEBI:18420"/>
    </cofactor>
    <text evidence="1">Binds 1 Mg(2+) ion per subunit.</text>
</comment>
<comment type="subunit">
    <text evidence="1">Homotetramer; dimer of dimers.</text>
</comment>
<comment type="similarity">
    <text evidence="2">Belongs to the isocitrate lyase/PEP mutase superfamily. Oxaloacetate decarboxylase family.</text>
</comment>
<comment type="sequence caution" evidence="2">
    <conflict type="erroneous initiation">
        <sequence resource="EMBL-CDS" id="ABR86223"/>
    </conflict>
</comment>
<organism>
    <name type="scientific">Pseudomonas paraeruginosa (strain DSM 24068 / PA7)</name>
    <name type="common">Pseudomonas aeruginosa (strain PA7)</name>
    <dbReference type="NCBI Taxonomy" id="381754"/>
    <lineage>
        <taxon>Bacteria</taxon>
        <taxon>Pseudomonadati</taxon>
        <taxon>Pseudomonadota</taxon>
        <taxon>Gammaproteobacteria</taxon>
        <taxon>Pseudomonadales</taxon>
        <taxon>Pseudomonadaceae</taxon>
        <taxon>Pseudomonas</taxon>
        <taxon>Pseudomonas paraeruginosa</taxon>
    </lineage>
</organism>
<sequence length="287" mass="31335">MHRASHHELRAMFRALLDSSRCYHTASVFDPMSARIAADLGFECGILGGSVASLQVLAAPDFALITLSEFVEQATRIGRVARLPVIADADHGYGNALNVMRTVVELERAGIAALTIEDTLLPAQFGRKSTDLICVEEGVGKIRAALEARVDPALTIIARTNAELIDVDAVIQRTLAYQEAGADGICLVGVRDFAHLEAIAEHLHIPLMLVTYGNPQLRDDARLARLGVRIVVNGHAAYFAAIKATYDCLREERGAVASDLTASELSKKYTFPEEYQAWARDYMEVKE</sequence>
<gene>
    <name type="ordered locus">PSPA7_5594</name>
</gene>
<dbReference type="EC" id="4.1.1.112" evidence="1"/>
<dbReference type="EMBL" id="CP000744">
    <property type="protein sequence ID" value="ABR86223.1"/>
    <property type="status" value="ALT_INIT"/>
    <property type="molecule type" value="Genomic_DNA"/>
</dbReference>
<dbReference type="RefSeq" id="WP_024915259.1">
    <property type="nucleotide sequence ID" value="NC_009656.1"/>
</dbReference>
<dbReference type="SMR" id="A6VCY0"/>
<dbReference type="GeneID" id="77223420"/>
<dbReference type="KEGG" id="pap:PSPA7_5594"/>
<dbReference type="HOGENOM" id="CLU_027389_3_2_6"/>
<dbReference type="Proteomes" id="UP000001582">
    <property type="component" value="Chromosome"/>
</dbReference>
<dbReference type="GO" id="GO:0000287">
    <property type="term" value="F:magnesium ion binding"/>
    <property type="evidence" value="ECO:0007669"/>
    <property type="project" value="UniProtKB-UniRule"/>
</dbReference>
<dbReference type="GO" id="GO:0046421">
    <property type="term" value="F:methylisocitrate lyase activity"/>
    <property type="evidence" value="ECO:0007669"/>
    <property type="project" value="TreeGrafter"/>
</dbReference>
<dbReference type="GO" id="GO:0008948">
    <property type="term" value="F:oxaloacetate decarboxylase activity"/>
    <property type="evidence" value="ECO:0007669"/>
    <property type="project" value="UniProtKB-UniRule"/>
</dbReference>
<dbReference type="GO" id="GO:0006107">
    <property type="term" value="P:oxaloacetate metabolic process"/>
    <property type="evidence" value="ECO:0007669"/>
    <property type="project" value="UniProtKB-UniRule"/>
</dbReference>
<dbReference type="GO" id="GO:0019629">
    <property type="term" value="P:propionate catabolic process, 2-methylcitrate cycle"/>
    <property type="evidence" value="ECO:0007669"/>
    <property type="project" value="TreeGrafter"/>
</dbReference>
<dbReference type="GO" id="GO:0042866">
    <property type="term" value="P:pyruvate biosynthetic process"/>
    <property type="evidence" value="ECO:0007669"/>
    <property type="project" value="UniProtKB-UniRule"/>
</dbReference>
<dbReference type="CDD" id="cd00377">
    <property type="entry name" value="ICL_PEPM"/>
    <property type="match status" value="1"/>
</dbReference>
<dbReference type="FunFam" id="3.20.20.60:FF:000015">
    <property type="entry name" value="Oxaloacetate decarboxylase"/>
    <property type="match status" value="1"/>
</dbReference>
<dbReference type="Gene3D" id="3.20.20.60">
    <property type="entry name" value="Phosphoenolpyruvate-binding domains"/>
    <property type="match status" value="1"/>
</dbReference>
<dbReference type="HAMAP" id="MF_01299">
    <property type="entry name" value="OadC"/>
    <property type="match status" value="1"/>
</dbReference>
<dbReference type="InterPro" id="IPR039556">
    <property type="entry name" value="ICL/PEPM"/>
</dbReference>
<dbReference type="InterPro" id="IPR023687">
    <property type="entry name" value="Oxaloacetate_deCOase_bac"/>
</dbReference>
<dbReference type="InterPro" id="IPR015813">
    <property type="entry name" value="Pyrv/PenolPyrv_kinase-like_dom"/>
</dbReference>
<dbReference type="InterPro" id="IPR040442">
    <property type="entry name" value="Pyrv_kinase-like_dom_sf"/>
</dbReference>
<dbReference type="PANTHER" id="PTHR42905:SF3">
    <property type="entry name" value="OXALOACETATE DECARBOXYLASE"/>
    <property type="match status" value="1"/>
</dbReference>
<dbReference type="PANTHER" id="PTHR42905">
    <property type="entry name" value="PHOSPHOENOLPYRUVATE CARBOXYLASE"/>
    <property type="match status" value="1"/>
</dbReference>
<dbReference type="Pfam" id="PF13714">
    <property type="entry name" value="PEP_mutase"/>
    <property type="match status" value="1"/>
</dbReference>
<dbReference type="SUPFAM" id="SSF51621">
    <property type="entry name" value="Phosphoenolpyruvate/pyruvate domain"/>
    <property type="match status" value="1"/>
</dbReference>
<proteinExistence type="inferred from homology"/>
<protein>
    <recommendedName>
        <fullName evidence="1">Oxaloacetate decarboxylase</fullName>
        <ecNumber evidence="1">4.1.1.112</ecNumber>
    </recommendedName>
</protein>
<accession>A6VCY0</accession>
<evidence type="ECO:0000255" key="1">
    <source>
        <dbReference type="HAMAP-Rule" id="MF_01299"/>
    </source>
</evidence>
<evidence type="ECO:0000305" key="2"/>
<keyword id="KW-0210">Decarboxylase</keyword>
<keyword id="KW-0456">Lyase</keyword>
<keyword id="KW-0460">Magnesium</keyword>
<keyword id="KW-0479">Metal-binding</keyword>
<reference key="1">
    <citation type="submission" date="2007-06" db="EMBL/GenBank/DDBJ databases">
        <authorList>
            <person name="Dodson R.J."/>
            <person name="Harkins D."/>
            <person name="Paulsen I.T."/>
        </authorList>
    </citation>
    <scope>NUCLEOTIDE SEQUENCE [LARGE SCALE GENOMIC DNA]</scope>
    <source>
        <strain>DSM 24068 / PA7</strain>
    </source>
</reference>
<feature type="chain" id="PRO_0000364059" description="Oxaloacetate decarboxylase">
    <location>
        <begin position="1"/>
        <end position="287"/>
    </location>
</feature>
<feature type="binding site" evidence="1">
    <location>
        <position position="50"/>
    </location>
    <ligand>
        <name>substrate</name>
    </ligand>
</feature>
<feature type="binding site" evidence="1">
    <location>
        <position position="88"/>
    </location>
    <ligand>
        <name>Mg(2+)</name>
        <dbReference type="ChEBI" id="CHEBI:18420"/>
    </ligand>
</feature>
<feature type="binding site" evidence="1">
    <location>
        <position position="159"/>
    </location>
    <ligand>
        <name>substrate</name>
    </ligand>
</feature>
<feature type="binding site" evidence="1">
    <location>
        <position position="235"/>
    </location>
    <ligand>
        <name>substrate</name>
    </ligand>
</feature>